<organism>
    <name type="scientific">Carboxydothermus hydrogenoformans (strain ATCC BAA-161 / DSM 6008 / Z-2901)</name>
    <dbReference type="NCBI Taxonomy" id="246194"/>
    <lineage>
        <taxon>Bacteria</taxon>
        <taxon>Bacillati</taxon>
        <taxon>Bacillota</taxon>
        <taxon>Clostridia</taxon>
        <taxon>Thermoanaerobacterales</taxon>
        <taxon>Thermoanaerobacteraceae</taxon>
        <taxon>Carboxydothermus</taxon>
    </lineage>
</organism>
<accession>Q3ABV0</accession>
<proteinExistence type="inferred from homology"/>
<dbReference type="EC" id="4.1.2.4" evidence="1"/>
<dbReference type="EMBL" id="CP000141">
    <property type="protein sequence ID" value="ABB15923.1"/>
    <property type="molecule type" value="Genomic_DNA"/>
</dbReference>
<dbReference type="RefSeq" id="WP_011344459.1">
    <property type="nucleotide sequence ID" value="NC_007503.1"/>
</dbReference>
<dbReference type="SMR" id="Q3ABV0"/>
<dbReference type="FunCoup" id="Q3ABV0">
    <property type="interactions" value="243"/>
</dbReference>
<dbReference type="STRING" id="246194.CHY_1552"/>
<dbReference type="KEGG" id="chy:CHY_1552"/>
<dbReference type="eggNOG" id="COG0274">
    <property type="taxonomic scope" value="Bacteria"/>
</dbReference>
<dbReference type="HOGENOM" id="CLU_053595_0_1_9"/>
<dbReference type="InParanoid" id="Q3ABV0"/>
<dbReference type="OrthoDB" id="9778711at2"/>
<dbReference type="UniPathway" id="UPA00002">
    <property type="reaction ID" value="UER00468"/>
</dbReference>
<dbReference type="Proteomes" id="UP000002706">
    <property type="component" value="Chromosome"/>
</dbReference>
<dbReference type="GO" id="GO:0005737">
    <property type="term" value="C:cytoplasm"/>
    <property type="evidence" value="ECO:0007669"/>
    <property type="project" value="UniProtKB-SubCell"/>
</dbReference>
<dbReference type="GO" id="GO:0004139">
    <property type="term" value="F:deoxyribose-phosphate aldolase activity"/>
    <property type="evidence" value="ECO:0007669"/>
    <property type="project" value="UniProtKB-UniRule"/>
</dbReference>
<dbReference type="GO" id="GO:0006018">
    <property type="term" value="P:2-deoxyribose 1-phosphate catabolic process"/>
    <property type="evidence" value="ECO:0007669"/>
    <property type="project" value="UniProtKB-UniRule"/>
</dbReference>
<dbReference type="GO" id="GO:0016052">
    <property type="term" value="P:carbohydrate catabolic process"/>
    <property type="evidence" value="ECO:0007669"/>
    <property type="project" value="TreeGrafter"/>
</dbReference>
<dbReference type="GO" id="GO:0009264">
    <property type="term" value="P:deoxyribonucleotide catabolic process"/>
    <property type="evidence" value="ECO:0007669"/>
    <property type="project" value="InterPro"/>
</dbReference>
<dbReference type="CDD" id="cd00959">
    <property type="entry name" value="DeoC"/>
    <property type="match status" value="1"/>
</dbReference>
<dbReference type="FunFam" id="3.20.20.70:FF:000044">
    <property type="entry name" value="Deoxyribose-phosphate aldolase"/>
    <property type="match status" value="1"/>
</dbReference>
<dbReference type="Gene3D" id="3.20.20.70">
    <property type="entry name" value="Aldolase class I"/>
    <property type="match status" value="1"/>
</dbReference>
<dbReference type="HAMAP" id="MF_00114">
    <property type="entry name" value="DeoC_type1"/>
    <property type="match status" value="1"/>
</dbReference>
<dbReference type="InterPro" id="IPR013785">
    <property type="entry name" value="Aldolase_TIM"/>
</dbReference>
<dbReference type="InterPro" id="IPR011343">
    <property type="entry name" value="DeoC"/>
</dbReference>
<dbReference type="InterPro" id="IPR002915">
    <property type="entry name" value="DeoC/FbaB/LacD_aldolase"/>
</dbReference>
<dbReference type="InterPro" id="IPR028581">
    <property type="entry name" value="DeoC_typeI"/>
</dbReference>
<dbReference type="NCBIfam" id="TIGR00126">
    <property type="entry name" value="deoC"/>
    <property type="match status" value="1"/>
</dbReference>
<dbReference type="PANTHER" id="PTHR10889">
    <property type="entry name" value="DEOXYRIBOSE-PHOSPHATE ALDOLASE"/>
    <property type="match status" value="1"/>
</dbReference>
<dbReference type="PANTHER" id="PTHR10889:SF1">
    <property type="entry name" value="DEOXYRIBOSE-PHOSPHATE ALDOLASE"/>
    <property type="match status" value="1"/>
</dbReference>
<dbReference type="Pfam" id="PF01791">
    <property type="entry name" value="DeoC"/>
    <property type="match status" value="1"/>
</dbReference>
<dbReference type="PIRSF" id="PIRSF001357">
    <property type="entry name" value="DeoC"/>
    <property type="match status" value="1"/>
</dbReference>
<dbReference type="SMART" id="SM01133">
    <property type="entry name" value="DeoC"/>
    <property type="match status" value="1"/>
</dbReference>
<dbReference type="SUPFAM" id="SSF51569">
    <property type="entry name" value="Aldolase"/>
    <property type="match status" value="1"/>
</dbReference>
<reference key="1">
    <citation type="journal article" date="2005" name="PLoS Genet.">
        <title>Life in hot carbon monoxide: the complete genome sequence of Carboxydothermus hydrogenoformans Z-2901.</title>
        <authorList>
            <person name="Wu M."/>
            <person name="Ren Q."/>
            <person name="Durkin A.S."/>
            <person name="Daugherty S.C."/>
            <person name="Brinkac L.M."/>
            <person name="Dodson R.J."/>
            <person name="Madupu R."/>
            <person name="Sullivan S.A."/>
            <person name="Kolonay J.F."/>
            <person name="Nelson W.C."/>
            <person name="Tallon L.J."/>
            <person name="Jones K.M."/>
            <person name="Ulrich L.E."/>
            <person name="Gonzalez J.M."/>
            <person name="Zhulin I.B."/>
            <person name="Robb F.T."/>
            <person name="Eisen J.A."/>
        </authorList>
    </citation>
    <scope>NUCLEOTIDE SEQUENCE [LARGE SCALE GENOMIC DNA]</scope>
    <source>
        <strain>ATCC BAA-161 / DSM 6008 / Z-2901</strain>
    </source>
</reference>
<evidence type="ECO:0000255" key="1">
    <source>
        <dbReference type="HAMAP-Rule" id="MF_00114"/>
    </source>
</evidence>
<gene>
    <name evidence="1" type="primary">deoC</name>
    <name type="ordered locus">CHY_1552</name>
</gene>
<comment type="function">
    <text evidence="1">Catalyzes a reversible aldol reaction between acetaldehyde and D-glyceraldehyde 3-phosphate to generate 2-deoxy-D-ribose 5-phosphate.</text>
</comment>
<comment type="catalytic activity">
    <reaction evidence="1">
        <text>2-deoxy-D-ribose 5-phosphate = D-glyceraldehyde 3-phosphate + acetaldehyde</text>
        <dbReference type="Rhea" id="RHEA:12821"/>
        <dbReference type="ChEBI" id="CHEBI:15343"/>
        <dbReference type="ChEBI" id="CHEBI:59776"/>
        <dbReference type="ChEBI" id="CHEBI:62877"/>
        <dbReference type="EC" id="4.1.2.4"/>
    </reaction>
</comment>
<comment type="pathway">
    <text evidence="1">Carbohydrate degradation; 2-deoxy-D-ribose 1-phosphate degradation; D-glyceraldehyde 3-phosphate and acetaldehyde from 2-deoxy-alpha-D-ribose 1-phosphate: step 2/2.</text>
</comment>
<comment type="subcellular location">
    <subcellularLocation>
        <location evidence="1">Cytoplasm</location>
    </subcellularLocation>
</comment>
<comment type="similarity">
    <text evidence="1">Belongs to the DeoC/FbaB aldolase family. DeoC type 1 subfamily.</text>
</comment>
<keyword id="KW-0963">Cytoplasm</keyword>
<keyword id="KW-0456">Lyase</keyword>
<keyword id="KW-1185">Reference proteome</keyword>
<keyword id="KW-0704">Schiff base</keyword>
<name>DEOC_CARHZ</name>
<protein>
    <recommendedName>
        <fullName evidence="1">Deoxyribose-phosphate aldolase</fullName>
        <shortName evidence="1">DERA</shortName>
        <ecNumber evidence="1">4.1.2.4</ecNumber>
    </recommendedName>
    <alternativeName>
        <fullName evidence="1">2-deoxy-D-ribose 5-phosphate aldolase</fullName>
    </alternativeName>
    <alternativeName>
        <fullName evidence="1">Phosphodeoxyriboaldolase</fullName>
        <shortName evidence="1">Deoxyriboaldolase</shortName>
    </alternativeName>
</protein>
<sequence length="228" mass="24175">MVSSTKIAQMIDHTLLKATATYADIEKLCQEAKEFNFKSVCVNPAFVPFASQLLKDSEIKVCTVIGFPLGATSTAVKAYEASWAVENGALEVDMVINIGALKAGRYEEVLEDIKEVVSAAKGKNPTVVVKVIIETCYLTDEEKIKACELAVEAGADFVKTSTGFGTGGATVEDVRLMKRTVGEKAEVKASGGIRSFADAIKMIEAGATRLGTSSGVSIMQGLVSGEDY</sequence>
<feature type="chain" id="PRO_0000231536" description="Deoxyribose-phosphate aldolase">
    <location>
        <begin position="1"/>
        <end position="228"/>
    </location>
</feature>
<feature type="active site" description="Proton donor/acceptor" evidence="1">
    <location>
        <position position="93"/>
    </location>
</feature>
<feature type="active site" description="Schiff-base intermediate with acetaldehyde" evidence="1">
    <location>
        <position position="159"/>
    </location>
</feature>
<feature type="active site" description="Proton donor/acceptor" evidence="1">
    <location>
        <position position="188"/>
    </location>
</feature>